<dbReference type="EMBL" id="AY008372">
    <property type="protein sequence ID" value="AAG23400.1"/>
    <property type="molecule type" value="mRNA"/>
</dbReference>
<dbReference type="EMBL" id="AF392444">
    <property type="protein sequence ID" value="AAL40657.1"/>
    <property type="molecule type" value="mRNA"/>
</dbReference>
<dbReference type="EMBL" id="AF491781">
    <property type="protein sequence ID" value="AAM27386.1"/>
    <property type="molecule type" value="mRNA"/>
</dbReference>
<dbReference type="EMBL" id="AF491782">
    <property type="protein sequence ID" value="AAM27387.1"/>
    <property type="molecule type" value="mRNA"/>
</dbReference>
<dbReference type="EMBL" id="AF491783">
    <property type="protein sequence ID" value="AAM27388.1"/>
    <property type="molecule type" value="mRNA"/>
</dbReference>
<dbReference type="EMBL" id="AF491784">
    <property type="protein sequence ID" value="AAM27389.1"/>
    <property type="molecule type" value="mRNA"/>
</dbReference>
<dbReference type="EMBL" id="AF491785">
    <property type="protein sequence ID" value="AAM27390.1"/>
    <property type="molecule type" value="mRNA"/>
</dbReference>
<dbReference type="EMBL" id="AF491786">
    <property type="protein sequence ID" value="AAM27391.1"/>
    <property type="molecule type" value="mRNA"/>
</dbReference>
<dbReference type="EMBL" id="AF515639">
    <property type="protein sequence ID" value="AAM74165.1"/>
    <property type="molecule type" value="mRNA"/>
</dbReference>
<dbReference type="EMBL" id="AF515640">
    <property type="protein sequence ID" value="AAM74166.1"/>
    <property type="molecule type" value="mRNA"/>
</dbReference>
<dbReference type="EMBL" id="AB014604">
    <property type="protein sequence ID" value="BAA31679.2"/>
    <property type="status" value="ALT_INIT"/>
    <property type="molecule type" value="mRNA"/>
</dbReference>
<dbReference type="EMBL" id="AC003093">
    <property type="protein sequence ID" value="AAB83939.1"/>
    <property type="molecule type" value="Genomic_DNA"/>
</dbReference>
<dbReference type="EMBL" id="AC004008">
    <property type="status" value="NOT_ANNOTATED_CDS"/>
    <property type="molecule type" value="Genomic_DNA"/>
</dbReference>
<dbReference type="EMBL" id="AC004016">
    <property type="protein sequence ID" value="AAC26986.2"/>
    <property type="molecule type" value="Genomic_DNA"/>
</dbReference>
<dbReference type="EMBL" id="AC004239">
    <property type="status" value="NOT_ANNOTATED_CDS"/>
    <property type="molecule type" value="Genomic_DNA"/>
</dbReference>
<dbReference type="EMBL" id="CH236948">
    <property type="protein sequence ID" value="EAL24240.1"/>
    <property type="molecule type" value="Genomic_DNA"/>
</dbReference>
<dbReference type="EMBL" id="CH236948">
    <property type="protein sequence ID" value="EAL24241.1"/>
    <property type="molecule type" value="Genomic_DNA"/>
</dbReference>
<dbReference type="EMBL" id="CH236948">
    <property type="protein sequence ID" value="EAL24242.1"/>
    <property type="molecule type" value="Genomic_DNA"/>
</dbReference>
<dbReference type="EMBL" id="CH236948">
    <property type="protein sequence ID" value="EAL24243.1"/>
    <property type="molecule type" value="Genomic_DNA"/>
</dbReference>
<dbReference type="EMBL" id="CH236948">
    <property type="protein sequence ID" value="EAL24244.1"/>
    <property type="molecule type" value="Genomic_DNA"/>
</dbReference>
<dbReference type="EMBL" id="CH236948">
    <property type="protein sequence ID" value="EAL24245.1"/>
    <property type="molecule type" value="Genomic_DNA"/>
</dbReference>
<dbReference type="EMBL" id="CH471073">
    <property type="protein sequence ID" value="EAW93816.1"/>
    <property type="molecule type" value="Genomic_DNA"/>
</dbReference>
<dbReference type="EMBL" id="CH471073">
    <property type="protein sequence ID" value="EAW93817.1"/>
    <property type="molecule type" value="Genomic_DNA"/>
</dbReference>
<dbReference type="EMBL" id="CH471073">
    <property type="protein sequence ID" value="EAW93818.1"/>
    <property type="molecule type" value="Genomic_DNA"/>
</dbReference>
<dbReference type="EMBL" id="CH471073">
    <property type="protein sequence ID" value="EAW93819.1"/>
    <property type="molecule type" value="Genomic_DNA"/>
</dbReference>
<dbReference type="EMBL" id="CH471073">
    <property type="protein sequence ID" value="EAW93820.1"/>
    <property type="molecule type" value="Genomic_DNA"/>
</dbReference>
<dbReference type="EMBL" id="CH471073">
    <property type="protein sequence ID" value="EAW93821.1"/>
    <property type="molecule type" value="Genomic_DNA"/>
</dbReference>
<dbReference type="EMBL" id="BC017731">
    <property type="protein sequence ID" value="AAH17731.1"/>
    <property type="molecule type" value="mRNA"/>
</dbReference>
<dbReference type="EMBL" id="AF323727">
    <property type="protein sequence ID" value="AAG53408.1"/>
    <property type="molecule type" value="mRNA"/>
</dbReference>
<dbReference type="CCDS" id="CCDS47564.1">
    <molecule id="Q9H4L5-4"/>
</dbReference>
<dbReference type="CCDS" id="CCDS5390.1">
    <molecule id="Q9H4L5-1"/>
</dbReference>
<dbReference type="CCDS" id="CCDS5391.1">
    <molecule id="Q9H4L5-2"/>
</dbReference>
<dbReference type="CCDS" id="CCDS5392.1">
    <molecule id="Q9H4L5-3"/>
</dbReference>
<dbReference type="RefSeq" id="NP_056365.1">
    <molecule id="Q9H4L5-1"/>
    <property type="nucleotide sequence ID" value="NM_015550.4"/>
</dbReference>
<dbReference type="RefSeq" id="NP_663160.1">
    <molecule id="Q9H4L5-2"/>
    <property type="nucleotide sequence ID" value="NM_145320.2"/>
</dbReference>
<dbReference type="RefSeq" id="NP_663161.1">
    <molecule id="Q9H4L5-3"/>
    <property type="nucleotide sequence ID" value="NM_145321.2"/>
</dbReference>
<dbReference type="RefSeq" id="NP_663162.1">
    <molecule id="Q9H4L5-4"/>
    <property type="nucleotide sequence ID" value="NM_145322.2"/>
</dbReference>
<dbReference type="RefSeq" id="XP_005249755.1">
    <molecule id="Q9H4L5-1"/>
    <property type="nucleotide sequence ID" value="XM_005249698.4"/>
</dbReference>
<dbReference type="RefSeq" id="XP_006715744.1">
    <molecule id="Q9H4L5-2"/>
    <property type="nucleotide sequence ID" value="XM_006715681.4"/>
</dbReference>
<dbReference type="RefSeq" id="XP_006715745.1">
    <molecule id="Q9H4L5-3"/>
    <property type="nucleotide sequence ID" value="XM_006715682.4"/>
</dbReference>
<dbReference type="RefSeq" id="XP_006715746.1">
    <molecule id="Q9H4L5-4"/>
    <property type="nucleotide sequence ID" value="XM_006715683.4"/>
</dbReference>
<dbReference type="RefSeq" id="XP_011513560.1">
    <molecule id="Q9H4L5-1"/>
    <property type="nucleotide sequence ID" value="XM_011515258.3"/>
</dbReference>
<dbReference type="RefSeq" id="XP_047276090.1">
    <molecule id="Q9H4L5-1"/>
    <property type="nucleotide sequence ID" value="XM_047420134.1"/>
</dbReference>
<dbReference type="RefSeq" id="XP_047276091.1">
    <molecule id="Q9H4L5-1"/>
    <property type="nucleotide sequence ID" value="XM_047420135.1"/>
</dbReference>
<dbReference type="RefSeq" id="XP_047276092.1">
    <molecule id="Q9H4L5-1"/>
    <property type="nucleotide sequence ID" value="XM_047420136.1"/>
</dbReference>
<dbReference type="RefSeq" id="XP_047276093.1">
    <molecule id="Q9H4L5-1"/>
    <property type="nucleotide sequence ID" value="XM_047420137.1"/>
</dbReference>
<dbReference type="RefSeq" id="XP_047276094.1">
    <molecule id="Q9H4L5-1"/>
    <property type="nucleotide sequence ID" value="XM_047420138.1"/>
</dbReference>
<dbReference type="RefSeq" id="XP_047276099.1">
    <molecule id="Q9H4L5-2"/>
    <property type="nucleotide sequence ID" value="XM_047420143.1"/>
</dbReference>
<dbReference type="RefSeq" id="XP_047276100.1">
    <molecule id="Q9H4L5-2"/>
    <property type="nucleotide sequence ID" value="XM_047420144.1"/>
</dbReference>
<dbReference type="RefSeq" id="XP_047276101.1">
    <molecule id="Q9H4L5-2"/>
    <property type="nucleotide sequence ID" value="XM_047420145.1"/>
</dbReference>
<dbReference type="RefSeq" id="XP_047276102.1">
    <molecule id="Q9H4L5-2"/>
    <property type="nucleotide sequence ID" value="XM_047420146.1"/>
</dbReference>
<dbReference type="RefSeq" id="XP_047276103.1">
    <molecule id="Q9H4L5-3"/>
    <property type="nucleotide sequence ID" value="XM_047420147.1"/>
</dbReference>
<dbReference type="RefSeq" id="XP_047276104.1">
    <molecule id="Q9H4L5-3"/>
    <property type="nucleotide sequence ID" value="XM_047420148.1"/>
</dbReference>
<dbReference type="RefSeq" id="XP_047276105.1">
    <molecule id="Q9H4L5-3"/>
    <property type="nucleotide sequence ID" value="XM_047420149.1"/>
</dbReference>
<dbReference type="RefSeq" id="XP_047276106.1">
    <molecule id="Q9H4L5-3"/>
    <property type="nucleotide sequence ID" value="XM_047420150.1"/>
</dbReference>
<dbReference type="RefSeq" id="XP_047276107.1">
    <molecule id="Q9H4L5-4"/>
    <property type="nucleotide sequence ID" value="XM_047420151.1"/>
</dbReference>
<dbReference type="RefSeq" id="XP_054213762.1">
    <molecule id="Q9H4L5-1"/>
    <property type="nucleotide sequence ID" value="XM_054357787.1"/>
</dbReference>
<dbReference type="RefSeq" id="XP_054213763.1">
    <molecule id="Q9H4L5-1"/>
    <property type="nucleotide sequence ID" value="XM_054357788.1"/>
</dbReference>
<dbReference type="RefSeq" id="XP_054213764.1">
    <molecule id="Q9H4L5-1"/>
    <property type="nucleotide sequence ID" value="XM_054357789.1"/>
</dbReference>
<dbReference type="RefSeq" id="XP_054213765.1">
    <molecule id="Q9H4L5-1"/>
    <property type="nucleotide sequence ID" value="XM_054357790.1"/>
</dbReference>
<dbReference type="RefSeq" id="XP_054213766.1">
    <molecule id="Q9H4L5-1"/>
    <property type="nucleotide sequence ID" value="XM_054357791.1"/>
</dbReference>
<dbReference type="RefSeq" id="XP_054213767.1">
    <molecule id="Q9H4L5-1"/>
    <property type="nucleotide sequence ID" value="XM_054357792.1"/>
</dbReference>
<dbReference type="RefSeq" id="XP_054213768.1">
    <molecule id="Q9H4L5-1"/>
    <property type="nucleotide sequence ID" value="XM_054357793.1"/>
</dbReference>
<dbReference type="RefSeq" id="XP_054213773.1">
    <molecule id="Q9H4L5-2"/>
    <property type="nucleotide sequence ID" value="XM_054357798.1"/>
</dbReference>
<dbReference type="RefSeq" id="XP_054213774.1">
    <molecule id="Q9H4L5-2"/>
    <property type="nucleotide sequence ID" value="XM_054357799.1"/>
</dbReference>
<dbReference type="RefSeq" id="XP_054213775.1">
    <molecule id="Q9H4L5-2"/>
    <property type="nucleotide sequence ID" value="XM_054357800.1"/>
</dbReference>
<dbReference type="RefSeq" id="XP_054213776.1">
    <molecule id="Q9H4L5-2"/>
    <property type="nucleotide sequence ID" value="XM_054357801.1"/>
</dbReference>
<dbReference type="RefSeq" id="XP_054213777.1">
    <molecule id="Q9H4L5-2"/>
    <property type="nucleotide sequence ID" value="XM_054357802.1"/>
</dbReference>
<dbReference type="RefSeq" id="XP_054213778.1">
    <molecule id="Q9H4L5-3"/>
    <property type="nucleotide sequence ID" value="XM_054357803.1"/>
</dbReference>
<dbReference type="RefSeq" id="XP_054213779.1">
    <molecule id="Q9H4L5-3"/>
    <property type="nucleotide sequence ID" value="XM_054357804.1"/>
</dbReference>
<dbReference type="RefSeq" id="XP_054213780.1">
    <molecule id="Q9H4L5-3"/>
    <property type="nucleotide sequence ID" value="XM_054357805.1"/>
</dbReference>
<dbReference type="RefSeq" id="XP_054213781.1">
    <molecule id="Q9H4L5-3"/>
    <property type="nucleotide sequence ID" value="XM_054357806.1"/>
</dbReference>
<dbReference type="RefSeq" id="XP_054213782.1">
    <molecule id="Q9H4L5-3"/>
    <property type="nucleotide sequence ID" value="XM_054357807.1"/>
</dbReference>
<dbReference type="RefSeq" id="XP_054213783.1">
    <molecule id="Q9H4L5-4"/>
    <property type="nucleotide sequence ID" value="XM_054357808.1"/>
</dbReference>
<dbReference type="RefSeq" id="XP_054213784.1">
    <molecule id="Q9H4L5-4"/>
    <property type="nucleotide sequence ID" value="XM_054357809.1"/>
</dbReference>
<dbReference type="PDB" id="7CYZ">
    <property type="method" value="X-ray"/>
    <property type="resolution" value="2.10 A"/>
    <property type="chains" value="A/B=511-887"/>
</dbReference>
<dbReference type="PDB" id="7DEI">
    <property type="method" value="X-ray"/>
    <property type="resolution" value="2.60 A"/>
    <property type="chains" value="A/B=504-887"/>
</dbReference>
<dbReference type="PDB" id="7DEJ">
    <property type="method" value="X-ray"/>
    <property type="resolution" value="2.70 A"/>
    <property type="chains" value="A/B=504-887"/>
</dbReference>
<dbReference type="PDBsum" id="7CYZ"/>
<dbReference type="PDBsum" id="7DEI"/>
<dbReference type="PDBsum" id="7DEJ"/>
<dbReference type="SMR" id="Q9H4L5"/>
<dbReference type="BioGRID" id="117497">
    <property type="interactions" value="125"/>
</dbReference>
<dbReference type="ELM" id="Q9H4L5"/>
<dbReference type="FunCoup" id="Q9H4L5">
    <property type="interactions" value="1813"/>
</dbReference>
<dbReference type="IntAct" id="Q9H4L5">
    <property type="interactions" value="83"/>
</dbReference>
<dbReference type="MINT" id="Q9H4L5"/>
<dbReference type="STRING" id="9606.ENSP00000315410"/>
<dbReference type="GlyGen" id="Q9H4L5">
    <property type="glycosylation" value="1 site, 1 N-linked glycan (1 site)"/>
</dbReference>
<dbReference type="iPTMnet" id="Q9H4L5"/>
<dbReference type="PhosphoSitePlus" id="Q9H4L5"/>
<dbReference type="BioMuta" id="OSBPL3"/>
<dbReference type="DMDM" id="20139176"/>
<dbReference type="jPOST" id="Q9H4L5"/>
<dbReference type="MassIVE" id="Q9H4L5"/>
<dbReference type="PaxDb" id="9606-ENSP00000315410"/>
<dbReference type="PeptideAtlas" id="Q9H4L5"/>
<dbReference type="ProteomicsDB" id="80852">
    <molecule id="Q9H4L5-1"/>
</dbReference>
<dbReference type="ProteomicsDB" id="80853">
    <molecule id="Q9H4L5-2"/>
</dbReference>
<dbReference type="ProteomicsDB" id="80854">
    <molecule id="Q9H4L5-3"/>
</dbReference>
<dbReference type="ProteomicsDB" id="80855">
    <molecule id="Q9H4L5-4"/>
</dbReference>
<dbReference type="ProteomicsDB" id="80856">
    <molecule id="Q9H4L5-5"/>
</dbReference>
<dbReference type="ProteomicsDB" id="80857">
    <molecule id="Q9H4L5-6"/>
</dbReference>
<dbReference type="ProteomicsDB" id="80858">
    <molecule id="Q9H4L5-7"/>
</dbReference>
<dbReference type="ProteomicsDB" id="80859">
    <molecule id="Q9H4L5-8"/>
</dbReference>
<dbReference type="Pumba" id="Q9H4L5"/>
<dbReference type="Antibodypedia" id="12224">
    <property type="antibodies" value="115 antibodies from 26 providers"/>
</dbReference>
<dbReference type="DNASU" id="26031"/>
<dbReference type="Ensembl" id="ENST00000313367.7">
    <molecule id="Q9H4L5-1"/>
    <property type="protein sequence ID" value="ENSP00000315410.2"/>
    <property type="gene ID" value="ENSG00000070882.13"/>
</dbReference>
<dbReference type="Ensembl" id="ENST00000396429.5">
    <molecule id="Q9H4L5-3"/>
    <property type="protein sequence ID" value="ENSP00000379706.1"/>
    <property type="gene ID" value="ENSG00000070882.13"/>
</dbReference>
<dbReference type="Ensembl" id="ENST00000396431.5">
    <molecule id="Q9H4L5-2"/>
    <property type="protein sequence ID" value="ENSP00000379708.1"/>
    <property type="gene ID" value="ENSG00000070882.13"/>
</dbReference>
<dbReference type="Ensembl" id="ENST00000409069.5">
    <molecule id="Q9H4L5-4"/>
    <property type="protein sequence ID" value="ENSP00000386953.1"/>
    <property type="gene ID" value="ENSG00000070882.13"/>
</dbReference>
<dbReference type="Ensembl" id="ENST00000409452.5">
    <molecule id="Q9H4L5-5"/>
    <property type="protein sequence ID" value="ENSP00000386801.1"/>
    <property type="gene ID" value="ENSG00000070882.13"/>
</dbReference>
<dbReference type="Ensembl" id="ENST00000409555.5">
    <molecule id="Q9H4L5-8"/>
    <property type="protein sequence ID" value="ENSP00000386990.1"/>
    <property type="gene ID" value="ENSG00000070882.13"/>
</dbReference>
<dbReference type="Ensembl" id="ENST00000409759.5">
    <molecule id="Q9H4L5-7"/>
    <property type="protein sequence ID" value="ENSP00000386325.1"/>
    <property type="gene ID" value="ENSG00000070882.13"/>
</dbReference>
<dbReference type="Ensembl" id="ENST00000409863.5">
    <molecule id="Q9H4L5-6"/>
    <property type="protein sequence ID" value="ENSP00000386429.1"/>
    <property type="gene ID" value="ENSG00000070882.13"/>
</dbReference>
<dbReference type="GeneID" id="26031"/>
<dbReference type="KEGG" id="hsa:26031"/>
<dbReference type="MANE-Select" id="ENST00000313367.7">
    <property type="protein sequence ID" value="ENSP00000315410.2"/>
    <property type="RefSeq nucleotide sequence ID" value="NM_015550.4"/>
    <property type="RefSeq protein sequence ID" value="NP_056365.1"/>
</dbReference>
<dbReference type="UCSC" id="uc003sxf.5">
    <molecule id="Q9H4L5-1"/>
    <property type="organism name" value="human"/>
</dbReference>
<dbReference type="AGR" id="HGNC:16370"/>
<dbReference type="CTD" id="26031"/>
<dbReference type="DisGeNET" id="26031"/>
<dbReference type="GeneCards" id="OSBPL3"/>
<dbReference type="HGNC" id="HGNC:16370">
    <property type="gene designation" value="OSBPL3"/>
</dbReference>
<dbReference type="HPA" id="ENSG00000070882">
    <property type="expression patterns" value="Low tissue specificity"/>
</dbReference>
<dbReference type="MIM" id="606732">
    <property type="type" value="gene"/>
</dbReference>
<dbReference type="neXtProt" id="NX_Q9H4L5"/>
<dbReference type="OpenTargets" id="ENSG00000070882"/>
<dbReference type="PharmGKB" id="PA32828"/>
<dbReference type="VEuPathDB" id="HostDB:ENSG00000070882"/>
<dbReference type="eggNOG" id="KOG1737">
    <property type="taxonomic scope" value="Eukaryota"/>
</dbReference>
<dbReference type="GeneTree" id="ENSGT00940000155957"/>
<dbReference type="HOGENOM" id="CLU_007105_4_1_1"/>
<dbReference type="InParanoid" id="Q9H4L5"/>
<dbReference type="OMA" id="XAKYWST"/>
<dbReference type="OrthoDB" id="1854502at2759"/>
<dbReference type="PAN-GO" id="Q9H4L5">
    <property type="GO annotations" value="6 GO annotations based on evolutionary models"/>
</dbReference>
<dbReference type="PhylomeDB" id="Q9H4L5"/>
<dbReference type="TreeFam" id="TF320922"/>
<dbReference type="PathwayCommons" id="Q9H4L5"/>
<dbReference type="Reactome" id="R-HSA-192105">
    <property type="pathway name" value="Synthesis of bile acids and bile salts"/>
</dbReference>
<dbReference type="SignaLink" id="Q9H4L5"/>
<dbReference type="SIGNOR" id="Q9H4L5"/>
<dbReference type="BioGRID-ORCS" id="26031">
    <property type="hits" value="16 hits in 1157 CRISPR screens"/>
</dbReference>
<dbReference type="ChiTaRS" id="OSBPL3">
    <property type="organism name" value="human"/>
</dbReference>
<dbReference type="GeneWiki" id="OSBPL3"/>
<dbReference type="GenomeRNAi" id="26031"/>
<dbReference type="Pharos" id="Q9H4L5">
    <property type="development level" value="Tbio"/>
</dbReference>
<dbReference type="PRO" id="PR:Q9H4L5"/>
<dbReference type="Proteomes" id="UP000005640">
    <property type="component" value="Chromosome 7"/>
</dbReference>
<dbReference type="RNAct" id="Q9H4L5">
    <property type="molecule type" value="protein"/>
</dbReference>
<dbReference type="Bgee" id="ENSG00000070882">
    <property type="expression patterns" value="Expressed in bronchial epithelial cell and 160 other cell types or tissues"/>
</dbReference>
<dbReference type="ExpressionAtlas" id="Q9H4L5">
    <property type="expression patterns" value="baseline and differential"/>
</dbReference>
<dbReference type="GO" id="GO:0005829">
    <property type="term" value="C:cytosol"/>
    <property type="evidence" value="ECO:0000314"/>
    <property type="project" value="BHF-UCL"/>
</dbReference>
<dbReference type="GO" id="GO:0005789">
    <property type="term" value="C:endoplasmic reticulum membrane"/>
    <property type="evidence" value="ECO:0007669"/>
    <property type="project" value="UniProtKB-SubCell"/>
</dbReference>
<dbReference type="GO" id="GO:0032433">
    <property type="term" value="C:filopodium tip"/>
    <property type="evidence" value="ECO:0007669"/>
    <property type="project" value="UniProtKB-SubCell"/>
</dbReference>
<dbReference type="GO" id="GO:0016020">
    <property type="term" value="C:membrane"/>
    <property type="evidence" value="ECO:0007005"/>
    <property type="project" value="UniProtKB"/>
</dbReference>
<dbReference type="GO" id="GO:0031965">
    <property type="term" value="C:nuclear membrane"/>
    <property type="evidence" value="ECO:0000314"/>
    <property type="project" value="BHF-UCL"/>
</dbReference>
<dbReference type="GO" id="GO:0097038">
    <property type="term" value="C:perinuclear endoplasmic reticulum"/>
    <property type="evidence" value="ECO:0000314"/>
    <property type="project" value="BHF-UCL"/>
</dbReference>
<dbReference type="GO" id="GO:0005886">
    <property type="term" value="C:plasma membrane"/>
    <property type="evidence" value="ECO:0000314"/>
    <property type="project" value="BHF-UCL"/>
</dbReference>
<dbReference type="GO" id="GO:0015485">
    <property type="term" value="F:cholesterol binding"/>
    <property type="evidence" value="ECO:0000314"/>
    <property type="project" value="BHF-UCL"/>
</dbReference>
<dbReference type="GO" id="GO:0120015">
    <property type="term" value="F:sterol transfer activity"/>
    <property type="evidence" value="ECO:0000304"/>
    <property type="project" value="Reactome"/>
</dbReference>
<dbReference type="GO" id="GO:0006699">
    <property type="term" value="P:bile acid biosynthetic process"/>
    <property type="evidence" value="ECO:0000304"/>
    <property type="project" value="Reactome"/>
</dbReference>
<dbReference type="CDD" id="cd13287">
    <property type="entry name" value="PH_ORP3_ORP6_ORP7"/>
    <property type="match status" value="1"/>
</dbReference>
<dbReference type="FunFam" id="2.30.29.30:FF:000011">
    <property type="entry name" value="Oxysterol-binding protein"/>
    <property type="match status" value="1"/>
</dbReference>
<dbReference type="FunFam" id="2.40.160.120:FF:000001">
    <property type="entry name" value="Oxysterol-binding protein"/>
    <property type="match status" value="1"/>
</dbReference>
<dbReference type="FunFam" id="3.30.70.3490:FF:000004">
    <property type="entry name" value="Oxysterol-binding protein"/>
    <property type="match status" value="1"/>
</dbReference>
<dbReference type="Gene3D" id="2.40.160.120">
    <property type="match status" value="1"/>
</dbReference>
<dbReference type="Gene3D" id="3.30.70.3490">
    <property type="match status" value="1"/>
</dbReference>
<dbReference type="Gene3D" id="2.30.29.30">
    <property type="entry name" value="Pleckstrin-homology domain (PH domain)/Phosphotyrosine-binding domain (PTB)"/>
    <property type="match status" value="1"/>
</dbReference>
<dbReference type="InterPro" id="IPR037239">
    <property type="entry name" value="OSBP_sf"/>
</dbReference>
<dbReference type="InterPro" id="IPR000648">
    <property type="entry name" value="Oxysterol-bd"/>
</dbReference>
<dbReference type="InterPro" id="IPR018494">
    <property type="entry name" value="Oxysterol-bd_CS"/>
</dbReference>
<dbReference type="InterPro" id="IPR011993">
    <property type="entry name" value="PH-like_dom_sf"/>
</dbReference>
<dbReference type="InterPro" id="IPR041680">
    <property type="entry name" value="PH_8"/>
</dbReference>
<dbReference type="InterPro" id="IPR001849">
    <property type="entry name" value="PH_domain"/>
</dbReference>
<dbReference type="PANTHER" id="PTHR10972">
    <property type="entry name" value="OXYSTEROL-BINDING PROTEIN-RELATED"/>
    <property type="match status" value="1"/>
</dbReference>
<dbReference type="PANTHER" id="PTHR10972:SF15">
    <property type="entry name" value="OXYSTEROL-BINDING PROTEIN-RELATED PROTEIN 3"/>
    <property type="match status" value="1"/>
</dbReference>
<dbReference type="Pfam" id="PF01237">
    <property type="entry name" value="Oxysterol_BP"/>
    <property type="match status" value="1"/>
</dbReference>
<dbReference type="Pfam" id="PF15409">
    <property type="entry name" value="PH_8"/>
    <property type="match status" value="1"/>
</dbReference>
<dbReference type="SMART" id="SM00233">
    <property type="entry name" value="PH"/>
    <property type="match status" value="1"/>
</dbReference>
<dbReference type="SUPFAM" id="SSF144000">
    <property type="entry name" value="Oxysterol-binding protein-like"/>
    <property type="match status" value="1"/>
</dbReference>
<dbReference type="SUPFAM" id="SSF50729">
    <property type="entry name" value="PH domain-like"/>
    <property type="match status" value="1"/>
</dbReference>
<dbReference type="PROSITE" id="PS01013">
    <property type="entry name" value="OSBP"/>
    <property type="match status" value="1"/>
</dbReference>
<dbReference type="PROSITE" id="PS50003">
    <property type="entry name" value="PH_DOMAIN"/>
    <property type="match status" value="1"/>
</dbReference>
<protein>
    <recommendedName>
        <fullName>Oxysterol-binding protein-related protein 3</fullName>
        <shortName>ORP-3</shortName>
        <shortName>OSBP-related protein 3</shortName>
    </recommendedName>
</protein>
<evidence type="ECO:0000250" key="1">
    <source>
        <dbReference type="UniProtKB" id="Q9DBS9"/>
    </source>
</evidence>
<evidence type="ECO:0000255" key="2">
    <source>
        <dbReference type="PROSITE-ProRule" id="PRU00145"/>
    </source>
</evidence>
<evidence type="ECO:0000256" key="3">
    <source>
        <dbReference type="SAM" id="MobiDB-lite"/>
    </source>
</evidence>
<evidence type="ECO:0000269" key="4">
    <source>
    </source>
</evidence>
<evidence type="ECO:0000269" key="5">
    <source>
    </source>
</evidence>
<evidence type="ECO:0000269" key="6">
    <source>
    </source>
</evidence>
<evidence type="ECO:0000269" key="7">
    <source>
    </source>
</evidence>
<evidence type="ECO:0000269" key="8">
    <source>
    </source>
</evidence>
<evidence type="ECO:0000269" key="9">
    <source>
    </source>
</evidence>
<evidence type="ECO:0000303" key="10">
    <source>
    </source>
</evidence>
<evidence type="ECO:0000305" key="11"/>
<evidence type="ECO:0007744" key="12">
    <source>
    </source>
</evidence>
<evidence type="ECO:0007744" key="13">
    <source>
    </source>
</evidence>
<evidence type="ECO:0007744" key="14">
    <source>
    </source>
</evidence>
<evidence type="ECO:0007744" key="15">
    <source>
    </source>
</evidence>
<evidence type="ECO:0007744" key="16">
    <source>
    </source>
</evidence>
<evidence type="ECO:0007744" key="17">
    <source>
    </source>
</evidence>
<evidence type="ECO:0007744" key="18">
    <source>
    </source>
</evidence>
<evidence type="ECO:0007829" key="19">
    <source>
        <dbReference type="PDB" id="7CYZ"/>
    </source>
</evidence>
<evidence type="ECO:0007829" key="20">
    <source>
        <dbReference type="PDB" id="7DEI"/>
    </source>
</evidence>
<evidence type="ECO:0007829" key="21">
    <source>
        <dbReference type="PDB" id="7DEJ"/>
    </source>
</evidence>
<accession>Q9H4L5</accession>
<accession>A4D167</accession>
<accession>A4D168</accession>
<accession>A4D169</accession>
<accession>A4D170</accession>
<accession>A4D171</accession>
<accession>A4D172</accession>
<accession>B8ZZ79</accession>
<accession>B8ZZP0</accession>
<accession>O14591</accession>
<accession>O43357</accession>
<accession>O43358</accession>
<accession>Q8N702</accession>
<accession>Q8N703</accession>
<accession>Q8N704</accession>
<accession>Q8NFH0</accession>
<accession>Q8NFH1</accession>
<accession>Q8NI12</accession>
<accession>Q8NI13</accession>
<accession>Q9BZF4</accession>
<accession>Q9UED6</accession>
<keyword id="KW-0002">3D-structure</keyword>
<keyword id="KW-0025">Alternative splicing</keyword>
<keyword id="KW-1003">Cell membrane</keyword>
<keyword id="KW-0966">Cell projection</keyword>
<keyword id="KW-0963">Cytoplasm</keyword>
<keyword id="KW-0256">Endoplasmic reticulum</keyword>
<keyword id="KW-0445">Lipid transport</keyword>
<keyword id="KW-0446">Lipid-binding</keyword>
<keyword id="KW-0472">Membrane</keyword>
<keyword id="KW-0539">Nucleus</keyword>
<keyword id="KW-0597">Phosphoprotein</keyword>
<keyword id="KW-1267">Proteomics identification</keyword>
<keyword id="KW-1185">Reference proteome</keyword>
<keyword id="KW-0813">Transport</keyword>
<reference key="1">
    <citation type="journal article" date="2001" name="Blood">
        <title>ORP-3, a human oxysterol-binding protein gene differentially expressed in hematopoietic cells.</title>
        <authorList>
            <person name="Gregorio-King C.C."/>
            <person name="Collier G.R."/>
            <person name="McMillan J.S."/>
            <person name="Waugh C.M."/>
            <person name="McLeod J.L."/>
            <person name="Collier F.M."/>
            <person name="Kirkland M.A."/>
        </authorList>
    </citation>
    <scope>NUCLEOTIDE SEQUENCE [MRNA] (ISOFORM 1A)</scope>
</reference>
<reference key="2">
    <citation type="journal article" date="2001" name="Genomics">
        <title>A family of 12 human genes containing oxysterol-binding domains.</title>
        <authorList>
            <person name="Jaworski C.J."/>
            <person name="Moreira E."/>
            <person name="Li A."/>
            <person name="Lee R."/>
            <person name="Rodriguez I.R."/>
        </authorList>
    </citation>
    <scope>NUCLEOTIDE SEQUENCE [MRNA] (ISOFORM 1A)</scope>
</reference>
<reference key="3">
    <citation type="journal article" date="2003" name="DNA Cell Biol.">
        <title>ORP3 splice variants and their expression in human tissues and hematopoietic cells.</title>
        <authorList>
            <person name="Collier F.M."/>
            <person name="Gregorio-King C.C."/>
            <person name="Apostolopoulos J."/>
            <person name="Walder K."/>
            <person name="Kirkland M.A."/>
        </authorList>
    </citation>
    <scope>NUCLEOTIDE SEQUENCE [MRNA] (ISOFORMS 1A; 1B; 1C; 1D; 2A; 2B; 2C AND 2D)</scope>
    <scope>TISSUE SPECIFICITY</scope>
</reference>
<reference key="4">
    <citation type="journal article" date="1998" name="DNA Res.">
        <title>Prediction of the coding sequences of unidentified human genes. X. The complete sequences of 100 new cDNA clones from brain which can code for large proteins in vitro.</title>
        <authorList>
            <person name="Ishikawa K."/>
            <person name="Nagase T."/>
            <person name="Suyama M."/>
            <person name="Miyajima N."/>
            <person name="Tanaka A."/>
            <person name="Kotani H."/>
            <person name="Nomura N."/>
            <person name="Ohara O."/>
        </authorList>
    </citation>
    <scope>NUCLEOTIDE SEQUENCE [LARGE SCALE MRNA] (ISOFORM 1A)</scope>
    <source>
        <tissue>Brain</tissue>
    </source>
</reference>
<reference key="5">
    <citation type="submission" date="2003-01" db="EMBL/GenBank/DDBJ databases">
        <authorList>
            <person name="Ohara O."/>
            <person name="Suyama M."/>
            <person name="Nagase T."/>
            <person name="Ishikawa K."/>
        </authorList>
    </citation>
    <scope>SEQUENCE REVISION</scope>
</reference>
<reference key="6">
    <citation type="journal article" date="2003" name="Science">
        <title>Human chromosome 7: DNA sequence and biology.</title>
        <authorList>
            <person name="Scherer S.W."/>
            <person name="Cheung J."/>
            <person name="MacDonald J.R."/>
            <person name="Osborne L.R."/>
            <person name="Nakabayashi K."/>
            <person name="Herbrick J.-A."/>
            <person name="Carson A.R."/>
            <person name="Parker-Katiraee L."/>
            <person name="Skaug J."/>
            <person name="Khaja R."/>
            <person name="Zhang J."/>
            <person name="Hudek A.K."/>
            <person name="Li M."/>
            <person name="Haddad M."/>
            <person name="Duggan G.E."/>
            <person name="Fernandez B.A."/>
            <person name="Kanematsu E."/>
            <person name="Gentles S."/>
            <person name="Christopoulos C.C."/>
            <person name="Choufani S."/>
            <person name="Kwasnicka D."/>
            <person name="Zheng X.H."/>
            <person name="Lai Z."/>
            <person name="Nusskern D.R."/>
            <person name="Zhang Q."/>
            <person name="Gu Z."/>
            <person name="Lu F."/>
            <person name="Zeesman S."/>
            <person name="Nowaczyk M.J."/>
            <person name="Teshima I."/>
            <person name="Chitayat D."/>
            <person name="Shuman C."/>
            <person name="Weksberg R."/>
            <person name="Zackai E.H."/>
            <person name="Grebe T.A."/>
            <person name="Cox S.R."/>
            <person name="Kirkpatrick S.J."/>
            <person name="Rahman N."/>
            <person name="Friedman J.M."/>
            <person name="Heng H.H.Q."/>
            <person name="Pelicci P.G."/>
            <person name="Lo-Coco F."/>
            <person name="Belloni E."/>
            <person name="Shaffer L.G."/>
            <person name="Pober B."/>
            <person name="Morton C.C."/>
            <person name="Gusella J.F."/>
            <person name="Bruns G.A.P."/>
            <person name="Korf B.R."/>
            <person name="Quade B.J."/>
            <person name="Ligon A.H."/>
            <person name="Ferguson H."/>
            <person name="Higgins A.W."/>
            <person name="Leach N.T."/>
            <person name="Herrick S.R."/>
            <person name="Lemyre E."/>
            <person name="Farra C.G."/>
            <person name="Kim H.-G."/>
            <person name="Summers A.M."/>
            <person name="Gripp K.W."/>
            <person name="Roberts W."/>
            <person name="Szatmari P."/>
            <person name="Winsor E.J.T."/>
            <person name="Grzeschik K.-H."/>
            <person name="Teebi A."/>
            <person name="Minassian B.A."/>
            <person name="Kere J."/>
            <person name="Armengol L."/>
            <person name="Pujana M.A."/>
            <person name="Estivill X."/>
            <person name="Wilson M.D."/>
            <person name="Koop B.F."/>
            <person name="Tosi S."/>
            <person name="Moore G.E."/>
            <person name="Boright A.P."/>
            <person name="Zlotorynski E."/>
            <person name="Kerem B."/>
            <person name="Kroisel P.M."/>
            <person name="Petek E."/>
            <person name="Oscier D.G."/>
            <person name="Mould S.J."/>
            <person name="Doehner H."/>
            <person name="Doehner K."/>
            <person name="Rommens J.M."/>
            <person name="Vincent J.B."/>
            <person name="Venter J.C."/>
            <person name="Li P.W."/>
            <person name="Mural R.J."/>
            <person name="Adams M.D."/>
            <person name="Tsui L.-C."/>
        </authorList>
    </citation>
    <scope>NUCLEOTIDE SEQUENCE [LARGE SCALE GENOMIC DNA]</scope>
</reference>
<reference key="7">
    <citation type="submission" date="2005-07" db="EMBL/GenBank/DDBJ databases">
        <authorList>
            <person name="Mural R.J."/>
            <person name="Istrail S."/>
            <person name="Sutton G.G."/>
            <person name="Florea L."/>
            <person name="Halpern A.L."/>
            <person name="Mobarry C.M."/>
            <person name="Lippert R."/>
            <person name="Walenz B."/>
            <person name="Shatkay H."/>
            <person name="Dew I."/>
            <person name="Miller J.R."/>
            <person name="Flanigan M.J."/>
            <person name="Edwards N.J."/>
            <person name="Bolanos R."/>
            <person name="Fasulo D."/>
            <person name="Halldorsson B.V."/>
            <person name="Hannenhalli S."/>
            <person name="Turner R."/>
            <person name="Yooseph S."/>
            <person name="Lu F."/>
            <person name="Nusskern D.R."/>
            <person name="Shue B.C."/>
            <person name="Zheng X.H."/>
            <person name="Zhong F."/>
            <person name="Delcher A.L."/>
            <person name="Huson D.H."/>
            <person name="Kravitz S.A."/>
            <person name="Mouchard L."/>
            <person name="Reinert K."/>
            <person name="Remington K.A."/>
            <person name="Clark A.G."/>
            <person name="Waterman M.S."/>
            <person name="Eichler E.E."/>
            <person name="Adams M.D."/>
            <person name="Hunkapiller M.W."/>
            <person name="Myers E.W."/>
            <person name="Venter J.C."/>
        </authorList>
    </citation>
    <scope>NUCLEOTIDE SEQUENCE [LARGE SCALE GENOMIC DNA]</scope>
</reference>
<reference key="8">
    <citation type="journal article" date="2003" name="Nature">
        <title>The DNA sequence of human chromosome 7.</title>
        <authorList>
            <person name="Hillier L.W."/>
            <person name="Fulton R.S."/>
            <person name="Fulton L.A."/>
            <person name="Graves T.A."/>
            <person name="Pepin K.H."/>
            <person name="Wagner-McPherson C."/>
            <person name="Layman D."/>
            <person name="Maas J."/>
            <person name="Jaeger S."/>
            <person name="Walker R."/>
            <person name="Wylie K."/>
            <person name="Sekhon M."/>
            <person name="Becker M.C."/>
            <person name="O'Laughlin M.D."/>
            <person name="Schaller M.E."/>
            <person name="Fewell G.A."/>
            <person name="Delehaunty K.D."/>
            <person name="Miner T.L."/>
            <person name="Nash W.E."/>
            <person name="Cordes M."/>
            <person name="Du H."/>
            <person name="Sun H."/>
            <person name="Edwards J."/>
            <person name="Bradshaw-Cordum H."/>
            <person name="Ali J."/>
            <person name="Andrews S."/>
            <person name="Isak A."/>
            <person name="Vanbrunt A."/>
            <person name="Nguyen C."/>
            <person name="Du F."/>
            <person name="Lamar B."/>
            <person name="Courtney L."/>
            <person name="Kalicki J."/>
            <person name="Ozersky P."/>
            <person name="Bielicki L."/>
            <person name="Scott K."/>
            <person name="Holmes A."/>
            <person name="Harkins R."/>
            <person name="Harris A."/>
            <person name="Strong C.M."/>
            <person name="Hou S."/>
            <person name="Tomlinson C."/>
            <person name="Dauphin-Kohlberg S."/>
            <person name="Kozlowicz-Reilly A."/>
            <person name="Leonard S."/>
            <person name="Rohlfing T."/>
            <person name="Rock S.M."/>
            <person name="Tin-Wollam A.-M."/>
            <person name="Abbott A."/>
            <person name="Minx P."/>
            <person name="Maupin R."/>
            <person name="Strowmatt C."/>
            <person name="Latreille P."/>
            <person name="Miller N."/>
            <person name="Johnson D."/>
            <person name="Murray J."/>
            <person name="Woessner J.P."/>
            <person name="Wendl M.C."/>
            <person name="Yang S.-P."/>
            <person name="Schultz B.R."/>
            <person name="Wallis J.W."/>
            <person name="Spieth J."/>
            <person name="Bieri T.A."/>
            <person name="Nelson J.O."/>
            <person name="Berkowicz N."/>
            <person name="Wohldmann P.E."/>
            <person name="Cook L.L."/>
            <person name="Hickenbotham M.T."/>
            <person name="Eldred J."/>
            <person name="Williams D."/>
            <person name="Bedell J.A."/>
            <person name="Mardis E.R."/>
            <person name="Clifton S.W."/>
            <person name="Chissoe S.L."/>
            <person name="Marra M.A."/>
            <person name="Raymond C."/>
            <person name="Haugen E."/>
            <person name="Gillett W."/>
            <person name="Zhou Y."/>
            <person name="James R."/>
            <person name="Phelps K."/>
            <person name="Iadanoto S."/>
            <person name="Bubb K."/>
            <person name="Simms E."/>
            <person name="Levy R."/>
            <person name="Clendenning J."/>
            <person name="Kaul R."/>
            <person name="Kent W.J."/>
            <person name="Furey T.S."/>
            <person name="Baertsch R.A."/>
            <person name="Brent M.R."/>
            <person name="Keibler E."/>
            <person name="Flicek P."/>
            <person name="Bork P."/>
            <person name="Suyama M."/>
            <person name="Bailey J.A."/>
            <person name="Portnoy M.E."/>
            <person name="Torrents D."/>
            <person name="Chinwalla A.T."/>
            <person name="Gish W.R."/>
            <person name="Eddy S.R."/>
            <person name="McPherson J.D."/>
            <person name="Olson M.V."/>
            <person name="Eichler E.E."/>
            <person name="Green E.D."/>
            <person name="Waterston R.H."/>
            <person name="Wilson R.K."/>
        </authorList>
    </citation>
    <scope>NUCLEOTIDE SEQUENCE [LARGE SCALE GENOMIC DNA]</scope>
</reference>
<reference key="9">
    <citation type="journal article" date="2004" name="Genome Res.">
        <title>The status, quality, and expansion of the NIH full-length cDNA project: the Mammalian Gene Collection (MGC).</title>
        <authorList>
            <consortium name="The MGC Project Team"/>
        </authorList>
    </citation>
    <scope>NUCLEOTIDE SEQUENCE [LARGE SCALE MRNA] (ISOFORM 1A)</scope>
    <source>
        <tissue>Uterus</tissue>
    </source>
</reference>
<reference key="10">
    <citation type="journal article" date="2001" name="J. Lipid Res.">
        <title>The OSBP-related protein family in humans.</title>
        <authorList>
            <person name="Lehto M."/>
            <person name="Laitinen S."/>
            <person name="Chinetti G."/>
            <person name="Johansson M."/>
            <person name="Ehnholm C."/>
            <person name="Staels B."/>
            <person name="Ikonen E."/>
            <person name="Olkkonen V.M."/>
        </authorList>
    </citation>
    <scope>NUCLEOTIDE SEQUENCE [MRNA] OF 1-245 (ISOFORM 1A)</scope>
</reference>
<reference key="11">
    <citation type="journal article" date="2004" name="Cell Tissue Res.">
        <title>Subfamily III of mammalian oxysterol-binding protein (OSBP) homologues: the expression and intracellular localization of ORP3, ORP6, and ORP7.</title>
        <authorList>
            <person name="Lehto M."/>
            <person name="Tienari J."/>
            <person name="Lehtonen S."/>
            <person name="Lehtonen E."/>
            <person name="Olkkonen V.M."/>
        </authorList>
    </citation>
    <scope>SUBCELLULAR LOCATION</scope>
    <scope>TISSUE SPECIFICITY</scope>
    <scope>DEVELOPMENTAL STAGE</scope>
</reference>
<reference key="12">
    <citation type="journal article" date="2005" name="Exp. Cell Res.">
        <title>Targeting of OSBP-related protein 3 (ORP3) to endoplasmic reticulum and plasma membrane is controlled by multiple determinants.</title>
        <authorList>
            <person name="Lehto M."/>
            <person name="Hynynen R."/>
            <person name="Karjalainen K."/>
            <person name="Kuismanen E."/>
            <person name="Hyvaerinen K."/>
            <person name="Olkkonen V.M."/>
        </authorList>
    </citation>
    <scope>FUNCTION</scope>
    <scope>SUBUNIT</scope>
    <scope>INTERACTION WITH VAPA</scope>
    <scope>SUBCELLULAR LOCATION</scope>
    <scope>PH DOMAIN</scope>
    <scope>FFAT MOTIF</scope>
    <scope>MUTAGENESIS OF LYS-60; LYS-61; LYS-71; ARG-72; GLY-97 AND 451-PHE--ASP-453</scope>
</reference>
<reference key="13">
    <citation type="journal article" date="2007" name="Biochem. J.">
        <title>The mammalian oxysterol-binding protein-related proteins (ORPs) bind 25-hydroxycholesterol in an evolutionarily conserved pocket.</title>
        <authorList>
            <person name="Suchanek M."/>
            <person name="Hynynen R."/>
            <person name="Wohlfahrt G."/>
            <person name="Lehto M."/>
            <person name="Johansson M."/>
            <person name="Saarinen H."/>
            <person name="Radzikowska A."/>
            <person name="Thiele C."/>
            <person name="Olkkonen V.M."/>
        </authorList>
    </citation>
    <scope>FUNCTION</scope>
</reference>
<reference key="14">
    <citation type="journal article" date="2008" name="J. Cell Sci.">
        <title>The R-Ras interaction partner ORP3 regulates cell adhesion.</title>
        <authorList>
            <person name="Lehto M."/>
            <person name="Maeyraenpaeae M.I."/>
            <person name="Pellinen T."/>
            <person name="Ihalmo P."/>
            <person name="Lehtonen S."/>
            <person name="Kovanen P.T."/>
            <person name="Groop P.H."/>
            <person name="Ivaska J."/>
            <person name="Olkkonen V.M."/>
        </authorList>
    </citation>
    <scope>FUNCTION</scope>
    <scope>SUBCELLULAR LOCATION</scope>
    <scope>INTERACTION WITH RRAS</scope>
    <scope>DOMAIN PH</scope>
    <scope>PHOSPHORYLATION</scope>
</reference>
<reference key="15">
    <citation type="journal article" date="2008" name="J. Proteome Res.">
        <title>Phosphoproteome of resting human platelets.</title>
        <authorList>
            <person name="Zahedi R.P."/>
            <person name="Lewandrowski U."/>
            <person name="Wiesner J."/>
            <person name="Wortelkamp S."/>
            <person name="Moebius J."/>
            <person name="Schuetz C."/>
            <person name="Walter U."/>
            <person name="Gambaryan S."/>
            <person name="Sickmann A."/>
        </authorList>
    </citation>
    <scope>PHOSPHORYLATION [LARGE SCALE ANALYSIS] AT SER-437</scope>
    <scope>IDENTIFICATION BY MASS SPECTROMETRY [LARGE SCALE ANALYSIS]</scope>
    <source>
        <tissue>Platelet</tissue>
    </source>
</reference>
<reference key="16">
    <citation type="journal article" date="2008" name="Mol. Cell">
        <title>Kinase-selective enrichment enables quantitative phosphoproteomics of the kinome across the cell cycle.</title>
        <authorList>
            <person name="Daub H."/>
            <person name="Olsen J.V."/>
            <person name="Bairlein M."/>
            <person name="Gnad F."/>
            <person name="Oppermann F.S."/>
            <person name="Korner R."/>
            <person name="Greff Z."/>
            <person name="Keri G."/>
            <person name="Stemmann O."/>
            <person name="Mann M."/>
        </authorList>
    </citation>
    <scope>PHOSPHORYLATION [LARGE SCALE ANALYSIS] AT SER-410 AND SER-437</scope>
    <scope>IDENTIFICATION BY MASS SPECTROMETRY [LARGE SCALE ANALYSIS]</scope>
    <source>
        <tissue>Cervix carcinoma</tissue>
    </source>
</reference>
<reference key="17">
    <citation type="journal article" date="2008" name="Proc. Natl. Acad. Sci. U.S.A.">
        <title>A quantitative atlas of mitotic phosphorylation.</title>
        <authorList>
            <person name="Dephoure N."/>
            <person name="Zhou C."/>
            <person name="Villen J."/>
            <person name="Beausoleil S.A."/>
            <person name="Bakalarski C.E."/>
            <person name="Elledge S.J."/>
            <person name="Gygi S.P."/>
        </authorList>
    </citation>
    <scope>PHOSPHORYLATION [LARGE SCALE ANALYSIS] AT SER-16; SER-251; SER-304; SER-372 AND SER-410</scope>
    <scope>IDENTIFICATION BY MASS SPECTROMETRY [LARGE SCALE ANALYSIS]</scope>
    <source>
        <tissue>Cervix carcinoma</tissue>
    </source>
</reference>
<reference key="18">
    <citation type="journal article" date="2009" name="Anal. Chem.">
        <title>Lys-N and trypsin cover complementary parts of the phosphoproteome in a refined SCX-based approach.</title>
        <authorList>
            <person name="Gauci S."/>
            <person name="Helbig A.O."/>
            <person name="Slijper M."/>
            <person name="Krijgsveld J."/>
            <person name="Heck A.J."/>
            <person name="Mohammed S."/>
        </authorList>
    </citation>
    <scope>IDENTIFICATION BY MASS SPECTROMETRY [LARGE SCALE ANALYSIS]</scope>
</reference>
<reference key="19">
    <citation type="journal article" date="2009" name="Mol. Cell. Proteomics">
        <title>Large-scale proteomics analysis of the human kinome.</title>
        <authorList>
            <person name="Oppermann F.S."/>
            <person name="Gnad F."/>
            <person name="Olsen J.V."/>
            <person name="Hornberger R."/>
            <person name="Greff Z."/>
            <person name="Keri G."/>
            <person name="Mann M."/>
            <person name="Daub H."/>
        </authorList>
    </citation>
    <scope>PHOSPHORYLATION [LARGE SCALE ANALYSIS] AT SER-34; SER-410 AND SER-437</scope>
    <scope>IDENTIFICATION BY MASS SPECTROMETRY [LARGE SCALE ANALYSIS]</scope>
</reference>
<reference key="20">
    <citation type="journal article" date="2009" name="Sci. Signal.">
        <title>Quantitative phosphoproteomic analysis of T cell receptor signaling reveals system-wide modulation of protein-protein interactions.</title>
        <authorList>
            <person name="Mayya V."/>
            <person name="Lundgren D.H."/>
            <person name="Hwang S.-I."/>
            <person name="Rezaul K."/>
            <person name="Wu L."/>
            <person name="Eng J.K."/>
            <person name="Rodionov V."/>
            <person name="Han D.K."/>
        </authorList>
    </citation>
    <scope>PHOSPHORYLATION [LARGE SCALE ANALYSIS] AT SER-304</scope>
    <scope>IDENTIFICATION BY MASS SPECTROMETRY [LARGE SCALE ANALYSIS]</scope>
    <source>
        <tissue>Leukemic T-cell</tissue>
    </source>
</reference>
<reference key="21">
    <citation type="journal article" date="2010" name="Sci. Signal.">
        <title>Quantitative phosphoproteomics reveals widespread full phosphorylation site occupancy during mitosis.</title>
        <authorList>
            <person name="Olsen J.V."/>
            <person name="Vermeulen M."/>
            <person name="Santamaria A."/>
            <person name="Kumar C."/>
            <person name="Miller M.L."/>
            <person name="Jensen L.J."/>
            <person name="Gnad F."/>
            <person name="Cox J."/>
            <person name="Jensen T.S."/>
            <person name="Nigg E.A."/>
            <person name="Brunak S."/>
            <person name="Mann M."/>
        </authorList>
    </citation>
    <scope>PHOSPHORYLATION [LARGE SCALE ANALYSIS] AT SER-304; SER-372 AND SER-410</scope>
    <scope>IDENTIFICATION BY MASS SPECTROMETRY [LARGE SCALE ANALYSIS]</scope>
    <source>
        <tissue>Cervix carcinoma</tissue>
    </source>
</reference>
<reference key="22">
    <citation type="journal article" date="2011" name="BMC Syst. Biol.">
        <title>Initial characterization of the human central proteome.</title>
        <authorList>
            <person name="Burkard T.R."/>
            <person name="Planyavsky M."/>
            <person name="Kaupe I."/>
            <person name="Breitwieser F.P."/>
            <person name="Buerckstuemmer T."/>
            <person name="Bennett K.L."/>
            <person name="Superti-Furga G."/>
            <person name="Colinge J."/>
        </authorList>
    </citation>
    <scope>IDENTIFICATION BY MASS SPECTROMETRY [LARGE SCALE ANALYSIS]</scope>
</reference>
<reference key="23">
    <citation type="journal article" date="2013" name="J. Proteome Res.">
        <title>Toward a comprehensive characterization of a human cancer cell phosphoproteome.</title>
        <authorList>
            <person name="Zhou H."/>
            <person name="Di Palma S."/>
            <person name="Preisinger C."/>
            <person name="Peng M."/>
            <person name="Polat A.N."/>
            <person name="Heck A.J."/>
            <person name="Mohammed S."/>
        </authorList>
    </citation>
    <scope>PHOSPHORYLATION [LARGE SCALE ANALYSIS] AT SER-34; SER-200; SER-251; SER-265; SER-304; SER-309; SER-320; SER-372; SER-410; SER-425; SER-437 AND SER-440</scope>
    <scope>IDENTIFICATION BY MASS SPECTROMETRY [LARGE SCALE ANALYSIS]</scope>
    <source>
        <tissue>Cervix carcinoma</tissue>
        <tissue>Erythroleukemia</tissue>
    </source>
</reference>
<reference key="24">
    <citation type="journal article" date="2014" name="J. Proteomics">
        <title>An enzyme assisted RP-RPLC approach for in-depth analysis of human liver phosphoproteome.</title>
        <authorList>
            <person name="Bian Y."/>
            <person name="Song C."/>
            <person name="Cheng K."/>
            <person name="Dong M."/>
            <person name="Wang F."/>
            <person name="Huang J."/>
            <person name="Sun D."/>
            <person name="Wang L."/>
            <person name="Ye M."/>
            <person name="Zou H."/>
        </authorList>
    </citation>
    <scope>IDENTIFICATION BY MASS SPECTROMETRY [LARGE SCALE ANALYSIS]</scope>
    <source>
        <tissue>Liver</tissue>
    </source>
</reference>
<reference key="25">
    <citation type="journal article" date="2015" name="Exp. Cell Res.">
        <title>OSBP-related protein 3 (ORP3) coupling with VAMP-associated protein A regulates R-Ras activity.</title>
        <authorList>
            <person name="Weber-Boyvat M."/>
            <person name="Kentala H."/>
            <person name="Lilja J."/>
            <person name="Vihervaara T."/>
            <person name="Hanninen R."/>
            <person name="Zhou Y."/>
            <person name="Peranen J."/>
            <person name="Nyman T.A."/>
            <person name="Ivaska J."/>
            <person name="Olkkonen V.M."/>
        </authorList>
    </citation>
    <scope>FUNCTION</scope>
    <scope>INTERACTION WITH VAPA</scope>
    <scope>SUBCELLULAR LOCATION</scope>
    <scope>DOMAIN FFAT MOTIF</scope>
    <scope>PHOSPHORYLATION AT SER-251; SER-265; SER-304; SER-320; SER-323; SER-371; SER-372; SER-410 AND SER-437</scope>
    <scope>IDENTIFICATION BY MASS SPECTROMETRY</scope>
    <scope>MUTAGENESIS OF 162-PHE--THR-167 AND 451-PHE--ASP-453</scope>
</reference>
<gene>
    <name type="primary">OSBPL3</name>
    <name type="synonym">KIAA0704</name>
    <name type="synonym">ORP3</name>
    <name type="synonym">OSBP3</name>
</gene>
<organism>
    <name type="scientific">Homo sapiens</name>
    <name type="common">Human</name>
    <dbReference type="NCBI Taxonomy" id="9606"/>
    <lineage>
        <taxon>Eukaryota</taxon>
        <taxon>Metazoa</taxon>
        <taxon>Chordata</taxon>
        <taxon>Craniata</taxon>
        <taxon>Vertebrata</taxon>
        <taxon>Euteleostomi</taxon>
        <taxon>Mammalia</taxon>
        <taxon>Eutheria</taxon>
        <taxon>Euarchontoglires</taxon>
        <taxon>Primates</taxon>
        <taxon>Haplorrhini</taxon>
        <taxon>Catarrhini</taxon>
        <taxon>Hominidae</taxon>
        <taxon>Homo</taxon>
    </lineage>
</organism>
<comment type="function">
    <text evidence="6 7 8 9">Phosphoinositide-binding protein which associates with both cell and endoplasmic reticulum (ER) membranes (PubMed:16143324). Can bind to the ER membrane protein VAPA and recruit VAPA to plasma membrane sites, thus linking these intracellular compartments (PubMed:25447204). The ORP3-VAPA complex stimulates RRAS signaling which in turn attenuates integrin beta-1 (ITGB1) activation at the cell surface (PubMed:18270267, PubMed:25447204). With VAPA, may regulate ER morphology (PubMed:16143324). Has a role in regulation of the actin cytoskeleton, cell polarity and cell adhesion (PubMed:18270267). Binds to phosphoinositides with preference for PI(3,4)P2 and PI(3,4,5)P3 (PubMed:16143324). Also binds 25-hydroxycholesterol and cholesterol (PubMed:17428193).</text>
</comment>
<comment type="subunit">
    <text evidence="1 6 8 9">Homodimer (PubMed:16143324). Interacts with RRAS (PubMed:18270267). Interacts (phosphorylated form) with VAPA (PubMed:16143324, PubMed:25447204). Interacts with OSBPL6 (By similarity).</text>
</comment>
<comment type="interaction">
    <interactant intactId="EBI-1051317">
        <id>Q9H4L5</id>
    </interactant>
    <interactant intactId="EBI-2818055">
        <id>Q08AH1</id>
        <label>ACSM1</label>
    </interactant>
    <organismsDiffer>false</organismsDiffer>
    <experiments>3</experiments>
</comment>
<comment type="interaction">
    <interactant intactId="EBI-1051317">
        <id>Q9H4L5</id>
    </interactant>
    <interactant intactId="EBI-358049">
        <id>Q13895</id>
        <label>BYSL</label>
    </interactant>
    <organismsDiffer>false</organismsDiffer>
    <experiments>3</experiments>
</comment>
<comment type="interaction">
    <interactant intactId="EBI-1051317">
        <id>Q9H4L5</id>
    </interactant>
    <interactant intactId="EBI-719941">
        <id>Q3B820</id>
        <label>FAM161A</label>
    </interactant>
    <organismsDiffer>false</organismsDiffer>
    <experiments>3</experiments>
</comment>
<comment type="interaction">
    <interactant intactId="EBI-1051317">
        <id>Q9H4L5</id>
    </interactant>
    <interactant intactId="EBI-746969">
        <id>Q9H0R8</id>
        <label>GABARAPL1</label>
    </interactant>
    <organismsDiffer>false</organismsDiffer>
    <experiments>3</experiments>
</comment>
<comment type="interaction">
    <interactant intactId="EBI-1051317">
        <id>Q9H4L5</id>
    </interactant>
    <interactant intactId="EBI-720116">
        <id>P60520</id>
        <label>GABARAPL2</label>
    </interactant>
    <organismsDiffer>false</organismsDiffer>
    <experiments>3</experiments>
</comment>
<comment type="interaction">
    <interactant intactId="EBI-1051317">
        <id>Q9H4L5</id>
    </interactant>
    <interactant intactId="EBI-739832">
        <id>Q8TBB1</id>
        <label>LNX1</label>
    </interactant>
    <organismsDiffer>false</organismsDiffer>
    <experiments>3</experiments>
</comment>
<comment type="interaction">
    <interactant intactId="EBI-1051317">
        <id>Q9H4L5</id>
    </interactant>
    <interactant intactId="EBI-348259">
        <id>Q96EZ8</id>
        <label>MCRS1</label>
    </interactant>
    <organismsDiffer>false</organismsDiffer>
    <experiments>3</experiments>
</comment>
<comment type="interaction">
    <interactant intactId="EBI-1051317">
        <id>Q9H4L5</id>
    </interactant>
    <interactant intactId="EBI-746202">
        <id>O00444</id>
        <label>PLK4</label>
    </interactant>
    <organismsDiffer>false</organismsDiffer>
    <experiments>3</experiments>
</comment>
<comment type="interaction">
    <interactant intactId="EBI-1051317">
        <id>Q9H4L5</id>
    </interactant>
    <interactant intactId="EBI-2798416">
        <id>Q99633</id>
        <label>PRPF18</label>
    </interactant>
    <organismsDiffer>false</organismsDiffer>
    <experiments>3</experiments>
</comment>
<comment type="interaction">
    <interactant intactId="EBI-1051317">
        <id>Q9H4L5</id>
    </interactant>
    <interactant intactId="EBI-744322">
        <id>O43395</id>
        <label>PRPF3</label>
    </interactant>
    <organismsDiffer>false</organismsDiffer>
    <experiments>3</experiments>
</comment>
<comment type="interaction">
    <interactant intactId="EBI-1051317">
        <id>Q9H4L5</id>
    </interactant>
    <interactant intactId="EBI-1050841">
        <id>Q86X27</id>
        <label>RALGPS2</label>
    </interactant>
    <organismsDiffer>false</organismsDiffer>
    <experiments>3</experiments>
</comment>
<comment type="interaction">
    <interactant intactId="EBI-1051317">
        <id>Q9H4L5</id>
    </interactant>
    <interactant intactId="EBI-11027771">
        <id>P62913-2</id>
        <label>RPL11</label>
    </interactant>
    <organismsDiffer>false</organismsDiffer>
    <experiments>3</experiments>
</comment>
<comment type="interaction">
    <interactant intactId="EBI-1051317">
        <id>Q9H4L5</id>
    </interactant>
    <interactant intactId="EBI-18986091">
        <id>Q8TDR2</id>
        <label>STK35</label>
    </interactant>
    <organismsDiffer>false</organismsDiffer>
    <experiments>3</experiments>
</comment>
<comment type="interaction">
    <interactant intactId="EBI-1051317">
        <id>Q9H4L5</id>
    </interactant>
    <interactant intactId="EBI-747142">
        <id>Q96C24</id>
        <label>SYTL4</label>
    </interactant>
    <organismsDiffer>false</organismsDiffer>
    <experiments>3</experiments>
</comment>
<comment type="interaction">
    <interactant intactId="EBI-1051317">
        <id>Q9H4L5</id>
    </interactant>
    <interactant intactId="EBI-710310">
        <id>Q15560</id>
        <label>TCEA2</label>
    </interactant>
    <organismsDiffer>false</organismsDiffer>
    <experiments>3</experiments>
</comment>
<comment type="interaction">
    <interactant intactId="EBI-1051317">
        <id>Q9H4L5</id>
    </interactant>
    <interactant intactId="EBI-11955057">
        <id>Q8N8B7-2</id>
        <label>TCEANC</label>
    </interactant>
    <organismsDiffer>false</organismsDiffer>
    <experiments>3</experiments>
</comment>
<comment type="interaction">
    <interactant intactId="EBI-1051317">
        <id>Q9H4L5</id>
    </interactant>
    <interactant intactId="EBI-765817">
        <id>Q9Y228</id>
        <label>TRAF3IP3</label>
    </interactant>
    <organismsDiffer>false</organismsDiffer>
    <experiments>3</experiments>
</comment>
<comment type="interaction">
    <interactant intactId="EBI-1051317">
        <id>Q9H4L5</id>
    </interactant>
    <interactant intactId="EBI-11745701">
        <id>P19544-6</id>
        <label>WT1</label>
    </interactant>
    <organismsDiffer>false</organismsDiffer>
    <experiments>3</experiments>
</comment>
<comment type="interaction">
    <interactant intactId="EBI-1051317">
        <id>Q9H4L5</id>
    </interactant>
    <interactant intactId="EBI-711925">
        <id>Q05516</id>
        <label>ZBTB16</label>
    </interactant>
    <organismsDiffer>false</organismsDiffer>
    <experiments>3</experiments>
</comment>
<comment type="interaction">
    <interactant intactId="EBI-1051317">
        <id>Q9H4L5</id>
    </interactant>
    <interactant intactId="EBI-12006434">
        <id>Q96MX3</id>
        <label>ZNF48</label>
    </interactant>
    <organismsDiffer>false</organismsDiffer>
    <experiments>3</experiments>
</comment>
<comment type="interaction">
    <interactant intactId="EBI-1051317">
        <id>Q9H4L5</id>
    </interactant>
    <interactant intactId="EBI-10486136">
        <id>Q6ZNH5</id>
        <label>ZNF497</label>
    </interactant>
    <organismsDiffer>false</organismsDiffer>
    <experiments>3</experiments>
</comment>
<comment type="interaction">
    <interactant intactId="EBI-1051317">
        <id>Q9H4L5</id>
    </interactant>
    <interactant intactId="EBI-11985915">
        <id>Q5T619</id>
        <label>ZNF648</label>
    </interactant>
    <organismsDiffer>false</organismsDiffer>
    <experiments>3</experiments>
</comment>
<comment type="interaction">
    <interactant intactId="EBI-1051317">
        <id>Q9H4L5</id>
    </interactant>
    <interactant intactId="EBI-5667516">
        <id>Q9Y2P0</id>
        <label>ZNF835</label>
    </interactant>
    <organismsDiffer>false</organismsDiffer>
    <experiments>3</experiments>
</comment>
<comment type="interaction">
    <interactant intactId="EBI-1051317">
        <id>Q9H4L5</id>
    </interactant>
    <interactant intactId="EBI-6248094">
        <id>Q9Q2G4</id>
        <label>ORF</label>
    </interactant>
    <organismsDiffer>true</organismsDiffer>
    <experiments>5</experiments>
</comment>
<comment type="subcellular location">
    <subcellularLocation>
        <location evidence="6">Endoplasmic reticulum membrane</location>
        <topology evidence="6">Peripheral membrane protein</topology>
    </subcellularLocation>
    <subcellularLocation>
        <location evidence="6">Cytoplasm</location>
        <location evidence="6">Cytosol</location>
    </subcellularLocation>
    <subcellularLocation>
        <location evidence="5 6 8 9">Cell membrane</location>
        <topology evidence="5 6 8 9">Peripheral membrane protein</topology>
    </subcellularLocation>
    <subcellularLocation>
        <location evidence="8">Cell projection</location>
        <location evidence="8">Filopodium tip</location>
    </subcellularLocation>
    <subcellularLocation>
        <location evidence="6">Nucleus membrane</location>
        <topology evidence="11">Peripheral membrane protein</topology>
    </subcellularLocation>
    <text evidence="1">Co-localizes with OSBPL6 at contact sites between the plasma membrane and the endoplasmic reticulum.</text>
</comment>
<comment type="alternative products">
    <event type="alternative splicing"/>
    <isoform>
        <id>Q9H4L5-1</id>
        <name>1a</name>
        <sequence type="displayed"/>
    </isoform>
    <isoform>
        <id>Q9H4L5-2</id>
        <name>1b</name>
        <sequence type="described" ref="VSP_008219"/>
    </isoform>
    <isoform>
        <id>Q9H4L5-3</id>
        <name>1c</name>
        <sequence type="described" ref="VSP_008220"/>
    </isoform>
    <isoform>
        <id>Q9H4L5-4</id>
        <name>1d</name>
        <sequence type="described" ref="VSP_008219 VSP_008220"/>
    </isoform>
    <isoform>
        <id>Q9H4L5-5</id>
        <name>2a</name>
        <sequence type="described" ref="VSP_008221 VSP_008222"/>
    </isoform>
    <isoform>
        <id>Q9H4L5-6</id>
        <name>2b</name>
        <sequence type="described" ref="VSP_008219 VSP_008221 VSP_008222"/>
    </isoform>
    <isoform>
        <id>Q9H4L5-7</id>
        <name>2c</name>
        <sequence type="described" ref="VSP_008220 VSP_008221 VSP_008222"/>
    </isoform>
    <isoform>
        <id>Q9H4L5-8</id>
        <name>2d</name>
        <sequence type="described" ref="VSP_008219 VSP_008220 VSP_008221 VSP_008222"/>
    </isoform>
</comment>
<comment type="tissue specificity">
    <text evidence="4 5">Expressed in a subset of small lymphocytes (at protein level). Expressed at high concentration in kidney, lymph node and thymus. Expressed at moderate concentration in stomach, jejunum, ileum, appendix, spleen, leukocytes, trachea, lung and thyroid gland. Expressed at low concentration in whole brain, esophagus, duodenum, ileocecum, colon, skeletal muscle, bone marrow, placenta and mammary gland (PubMed:14593528). Isoform 1a, isoform 1b, isoform 1c and isoform 1d are highly expressed in brain, bone marrow, colon, kidney, lung, skeletal muscle, spleen, thymus and thyroid. Not expressed in heart and liver. Isoform 2a, isoform 2b, isoform 2c and isoform 2d are expressed in brain, bone marrow, kidney, skeletal muscle, spleen, thymus and thyroid. Not expressed in heart, liver and lung (PubMed:12590732).</text>
</comment>
<comment type="developmental stage">
    <text evidence="5">Expressed in several fetal tissues including kidney, thymus, spleen and lung.</text>
</comment>
<comment type="domain">
    <text evidence="6 9">The FFAT 2 motif is required for interaction with VAPA and regulation of the endoplasmic reticulum targeting of ORP3. The FFAT 1 motif may contribute to VAPA binding.</text>
</comment>
<comment type="domain">
    <text evidence="6 8">The PH domain binds phosphoinositides, with a preference for PI(3,4)P2 and PI(3,4,5)P3. The PH domain mediates targeting to the plasma membrane (PubMed:18270267).</text>
</comment>
<comment type="PTM">
    <text evidence="8 9">Phosphorylation is enhanced in vitro by phorbol-12-myristate-13-acetate (PMA), forskolin and calcium ionophore A23187 (PubMed:25447204). Phosphorylation seems to be stimulated in conditions of low cell-cell (or cell-matrix) adhesion (PubMed:18270267).</text>
</comment>
<comment type="miscellaneous">
    <molecule>Isoform 2a</molecule>
    <text evidence="11">May be produced at very low levels due to a premature stop codon in the mRNA, leading to nonsense-mediated mRNA decay.</text>
</comment>
<comment type="miscellaneous">
    <molecule>Isoform 2b</molecule>
    <text evidence="11">May be produced at very low levels due to a premature stop codon in the mRNA, leading to nonsense-mediated mRNA decay.</text>
</comment>
<comment type="miscellaneous">
    <molecule>Isoform 2c</molecule>
    <text evidence="11">May be produced at very low levels due to a premature stop codon in the mRNA, leading to nonsense-mediated mRNA decay.</text>
</comment>
<comment type="miscellaneous">
    <molecule>Isoform 2d</molecule>
    <text evidence="11">May be produced at very low levels due to a premature stop codon in the mRNA, leading to nonsense-mediated mRNA decay.</text>
</comment>
<comment type="similarity">
    <text evidence="11">Belongs to the OSBP family.</text>
</comment>
<comment type="sequence caution" evidence="11">
    <conflict type="erroneous initiation">
        <sequence resource="EMBL-CDS" id="BAA31679"/>
    </conflict>
    <text>Extended N-terminus.</text>
</comment>
<sequence>MMSDEKNLGVSQKLVSPSRSTSSCSSKQGSRQDSWEVVEGLRGEMNYTQEPPVQKGFLLKKRKWPLKGWHKRFFYLDKGILKYAKSQTDIEREKLHGCIDVGLSVMSVKKSSKCIDLDTEEHIYHLKVKSEEVFDEWVSKLRHHRMYRQNEIAMFPHEVNHFFSGSTITDSSSGVFDSISSRKRSSISKQNLFQTGSNVSFSCGGETRVPLWLQSSEDMEKCSKDLAHCHAYLVEMSQLLQSMDVLHRTYSAPAINAIQGGSFESPKKEKRSHRRWRSRAIGKDAKGTLQVPKPFSGPVRLHSSNPNLSTLDFGEEKNYSDGSETSSEFSKMQEDLCHIAHKVYFTLRSAFNIMSAEREKLKQLMEQDASSSPSAQVIGLKNALSSALAQNTDLKERLRRIHAESLLLDSPAVAKSGDNLAEENSRDENRALVHQLSNESRLSITDSLSEFFDAQEVLLSPSSSENEISDDDSYVSDISDNLSLDNLSNDLDNERQTLGPVLDSGREAKSRRRTCLPAPCPSSSNISLWNILRNNIGKDLSKVAMPVELNEPLNTLQRLCEELEYSELLDKAAQIPSPLERMVYVAAFAISAYASSYYRAGSKPFNPVLGETYECIREDKGFQFFSEQVSHHPPISACHAESRNFVFWQDVRWKNKFWGKSMEIVPIGTTHVTLPVFGDHFEWNKVTSCIHNILSGQRWIEHYGEIVIKNLHDDSCYCKVNFIKAKYWSTNAHEIEGTVFDRSGKAVHRLFGKWHESIYCGGGSSSACVWRANPMPKGYEQYYSFTQFALELNEMDPSSKSLLPPTDTRFRPDQRFLEEGNLEEAEIQKQRIEQLQRERRRVLEENHVEHQPRFFRKSDDDSWVSNGTYLELRKDLGFSKLDHPVLW</sequence>
<name>OSBL3_HUMAN</name>
<proteinExistence type="evidence at protein level"/>
<feature type="chain" id="PRO_0000100371" description="Oxysterol-binding protein-related protein 3">
    <location>
        <begin position="1"/>
        <end position="887"/>
    </location>
</feature>
<feature type="domain" description="PH" evidence="2">
    <location>
        <begin position="51"/>
        <end position="146"/>
    </location>
</feature>
<feature type="region of interest" description="Disordered" evidence="3">
    <location>
        <begin position="1"/>
        <end position="35"/>
    </location>
</feature>
<feature type="region of interest" description="Disordered" evidence="3">
    <location>
        <begin position="261"/>
        <end position="326"/>
    </location>
</feature>
<feature type="short sequence motif" description="FFAT 1" evidence="9">
    <location>
        <begin position="161"/>
        <end position="167"/>
    </location>
</feature>
<feature type="short sequence motif" description="FFAT 2" evidence="9">
    <location>
        <begin position="450"/>
        <end position="454"/>
    </location>
</feature>
<feature type="compositionally biased region" description="Low complexity" evidence="3">
    <location>
        <begin position="16"/>
        <end position="32"/>
    </location>
</feature>
<feature type="compositionally biased region" description="Basic residues" evidence="3">
    <location>
        <begin position="268"/>
        <end position="280"/>
    </location>
</feature>
<feature type="modified residue" description="Phosphoserine" evidence="13">
    <location>
        <position position="16"/>
    </location>
</feature>
<feature type="modified residue" description="Phosphoserine" evidence="15 18">
    <location>
        <position position="34"/>
    </location>
</feature>
<feature type="modified residue" description="Phosphoserine" evidence="18">
    <location>
        <position position="200"/>
    </location>
</feature>
<feature type="modified residue" description="Phosphoserine" evidence="13 18">
    <location>
        <position position="251"/>
    </location>
</feature>
<feature type="modified residue" description="Phosphoserine" evidence="9 18">
    <location>
        <position position="265"/>
    </location>
</feature>
<feature type="modified residue" description="Phosphoserine" evidence="9 13 16 17 18">
    <location>
        <position position="304"/>
    </location>
</feature>
<feature type="modified residue" description="Phosphoserine" evidence="18">
    <location>
        <position position="309"/>
    </location>
</feature>
<feature type="modified residue" description="Phosphoserine" evidence="9 18">
    <location>
        <position position="320"/>
    </location>
</feature>
<feature type="modified residue" description="Phosphoserine" evidence="9">
    <location>
        <position position="323"/>
    </location>
</feature>
<feature type="modified residue" description="Phosphoserine" evidence="9">
    <location>
        <position position="371"/>
    </location>
</feature>
<feature type="modified residue" description="Phosphoserine" evidence="9 13 17 18">
    <location>
        <position position="372"/>
    </location>
</feature>
<feature type="modified residue" description="Phosphoserine" evidence="9 13 14 15 17 18">
    <location>
        <position position="410"/>
    </location>
</feature>
<feature type="modified residue" description="Phosphoserine" evidence="18">
    <location>
        <position position="425"/>
    </location>
</feature>
<feature type="modified residue" description="Phosphoserine" evidence="9 12 14 15 18">
    <location>
        <position position="437"/>
    </location>
</feature>
<feature type="modified residue" description="Phosphoserine" evidence="18">
    <location>
        <position position="440"/>
    </location>
</feature>
<feature type="splice variant" id="VSP_008219" description="In isoform 1b, isoform 1d, isoform 2b and isoform 2d." evidence="10">
    <location>
        <begin position="259"/>
        <end position="289"/>
    </location>
</feature>
<feature type="splice variant" id="VSP_008220" description="In isoform 1c, isoform 1d, isoform 2c and isoform 2d." evidence="10">
    <location>
        <begin position="387"/>
        <end position="422"/>
    </location>
</feature>
<feature type="splice variant" id="VSP_008221" description="In isoform 2a, isoform 2b, isoform 2c and isoform 2d." evidence="10">
    <original>YVAAFAISAYASSYYRAGSKPFNPVLGETYECIREDKGFQFFSEQVSH</original>
    <variation>RSQPSLATVQPRSPSHEAIHGAHQRDSPCSLRFHFDCSVNRFITQSCLASSAWLFPVTL</variation>
    <location>
        <begin position="584"/>
        <end position="631"/>
    </location>
</feature>
<feature type="splice variant" id="VSP_008222" description="In isoform 2a, isoform 2b, isoform 2c and isoform 2d." evidence="10">
    <location>
        <begin position="632"/>
        <end position="887"/>
    </location>
</feature>
<feature type="sequence variant" id="VAR_053548" description="In dbSNP:rs11768296.">
    <original>M</original>
    <variation>V</variation>
    <location>
        <position position="354"/>
    </location>
</feature>
<feature type="mutagenesis site" description="Abolishes plasma membrane targeting and nuclear localization." evidence="6">
    <original>K</original>
    <variation>I</variation>
    <location>
        <position position="60"/>
    </location>
</feature>
<feature type="mutagenesis site" description="Abolishes plasma membrane targeting and nuclear localization." evidence="6">
    <original>K</original>
    <variation>A</variation>
    <location>
        <position position="61"/>
    </location>
</feature>
<feature type="mutagenesis site" description="Abolishes plasma membrane targeting and nuclear localization." evidence="6">
    <original>K</original>
    <variation>A</variation>
    <location>
        <position position="71"/>
    </location>
</feature>
<feature type="mutagenesis site" description="Abolishes plasma membrane targeting and nuclear localization." evidence="6">
    <original>R</original>
    <variation>I</variation>
    <location>
        <position position="72"/>
    </location>
</feature>
<feature type="mutagenesis site" description="Decreases plasma membrane targeting and nuclear localization." evidence="6">
    <original>G</original>
    <variation>E</variation>
    <location>
        <position position="97"/>
    </location>
</feature>
<feature type="mutagenesis site" description="No effect on interaction with VAPA." evidence="9">
    <original>FFSGST</original>
    <variation>AAAAAA</variation>
    <location>
        <begin position="162"/>
        <end position="167"/>
    </location>
</feature>
<feature type="mutagenesis site" description="Reduces VAPA binding. Abolishes association with endoplasmic reticulum." evidence="6 9">
    <original>FFD</original>
    <variation>VVV</variation>
    <location>
        <begin position="451"/>
        <end position="453"/>
    </location>
</feature>
<feature type="helix" evidence="19">
    <location>
        <begin position="525"/>
        <end position="533"/>
    </location>
</feature>
<feature type="helix" evidence="19">
    <location>
        <begin position="540"/>
        <end position="542"/>
    </location>
</feature>
<feature type="helix" evidence="19">
    <location>
        <begin position="547"/>
        <end position="549"/>
    </location>
</feature>
<feature type="strand" evidence="19">
    <location>
        <begin position="550"/>
        <end position="554"/>
    </location>
</feature>
<feature type="helix" evidence="19">
    <location>
        <begin position="555"/>
        <end position="561"/>
    </location>
</feature>
<feature type="turn" evidence="19">
    <location>
        <begin position="562"/>
        <end position="566"/>
    </location>
</feature>
<feature type="helix" evidence="19">
    <location>
        <begin position="567"/>
        <end position="572"/>
    </location>
</feature>
<feature type="helix" evidence="19">
    <location>
        <begin position="578"/>
        <end position="591"/>
    </location>
</feature>
<feature type="helix" evidence="19">
    <location>
        <begin position="592"/>
        <end position="598"/>
    </location>
</feature>
<feature type="strand" evidence="19">
    <location>
        <begin position="603"/>
        <end position="605"/>
    </location>
</feature>
<feature type="strand" evidence="19">
    <location>
        <begin position="612"/>
        <end position="617"/>
    </location>
</feature>
<feature type="turn" evidence="19">
    <location>
        <begin position="618"/>
        <end position="621"/>
    </location>
</feature>
<feature type="strand" evidence="19">
    <location>
        <begin position="622"/>
        <end position="630"/>
    </location>
</feature>
<feature type="turn" evidence="19">
    <location>
        <begin position="631"/>
        <end position="634"/>
    </location>
</feature>
<feature type="strand" evidence="19">
    <location>
        <begin position="635"/>
        <end position="644"/>
    </location>
</feature>
<feature type="strand" evidence="19">
    <location>
        <begin position="646"/>
        <end position="658"/>
    </location>
</feature>
<feature type="strand" evidence="19">
    <location>
        <begin position="661"/>
        <end position="667"/>
    </location>
</feature>
<feature type="strand" evidence="19">
    <location>
        <begin position="669"/>
        <end position="674"/>
    </location>
</feature>
<feature type="helix" evidence="19">
    <location>
        <begin position="675"/>
        <end position="677"/>
    </location>
</feature>
<feature type="strand" evidence="19">
    <location>
        <begin position="679"/>
        <end position="684"/>
    </location>
</feature>
<feature type="strand" evidence="19">
    <location>
        <begin position="687"/>
        <end position="691"/>
    </location>
</feature>
<feature type="strand" evidence="21">
    <location>
        <begin position="693"/>
        <end position="697"/>
    </location>
</feature>
<feature type="strand" evidence="19">
    <location>
        <begin position="699"/>
        <end position="710"/>
    </location>
</feature>
<feature type="strand" evidence="19">
    <location>
        <begin position="716"/>
        <end position="722"/>
    </location>
</feature>
<feature type="turn" evidence="20">
    <location>
        <begin position="730"/>
        <end position="733"/>
    </location>
</feature>
<feature type="strand" evidence="19">
    <location>
        <begin position="734"/>
        <end position="741"/>
    </location>
</feature>
<feature type="strand" evidence="19">
    <location>
        <begin position="746"/>
        <end position="753"/>
    </location>
</feature>
<feature type="turn" evidence="19">
    <location>
        <begin position="754"/>
        <end position="756"/>
    </location>
</feature>
<feature type="strand" evidence="19">
    <location>
        <begin position="757"/>
        <end position="761"/>
    </location>
</feature>
<feature type="strand" evidence="21">
    <location>
        <begin position="762"/>
        <end position="764"/>
    </location>
</feature>
<feature type="strand" evidence="19">
    <location>
        <begin position="766"/>
        <end position="771"/>
    </location>
</feature>
<feature type="helix" evidence="19">
    <location>
        <begin position="779"/>
        <end position="782"/>
    </location>
</feature>
<feature type="helix" evidence="19">
    <location>
        <begin position="787"/>
        <end position="792"/>
    </location>
</feature>
<feature type="turn" evidence="19">
    <location>
        <begin position="797"/>
        <end position="799"/>
    </location>
</feature>
<feature type="helix" evidence="19">
    <location>
        <begin position="800"/>
        <end position="802"/>
    </location>
</feature>
<feature type="helix" evidence="19">
    <location>
        <begin position="808"/>
        <end position="810"/>
    </location>
</feature>
<feature type="helix" evidence="19">
    <location>
        <begin position="812"/>
        <end position="818"/>
    </location>
</feature>
<feature type="helix" evidence="19">
    <location>
        <begin position="822"/>
        <end position="845"/>
    </location>
</feature>
<feature type="strand" evidence="19">
    <location>
        <begin position="853"/>
        <end position="857"/>
    </location>
</feature>
<feature type="strand" evidence="19">
    <location>
        <begin position="863"/>
        <end position="865"/>
    </location>
</feature>
<feature type="helix" evidence="19">
    <location>
        <begin position="869"/>
        <end position="874"/>
    </location>
</feature>
<feature type="helix" evidence="19">
    <location>
        <begin position="878"/>
        <end position="880"/>
    </location>
</feature>